<organism>
    <name type="scientific">Histophilus somni (strain 129Pt)</name>
    <name type="common">Haemophilus somnus</name>
    <dbReference type="NCBI Taxonomy" id="205914"/>
    <lineage>
        <taxon>Bacteria</taxon>
        <taxon>Pseudomonadati</taxon>
        <taxon>Pseudomonadota</taxon>
        <taxon>Gammaproteobacteria</taxon>
        <taxon>Pasteurellales</taxon>
        <taxon>Pasteurellaceae</taxon>
        <taxon>Histophilus</taxon>
    </lineage>
</organism>
<accession>Q0I4W6</accession>
<evidence type="ECO:0000255" key="1">
    <source>
        <dbReference type="HAMAP-Rule" id="MF_00189"/>
    </source>
</evidence>
<comment type="function">
    <text evidence="1">Plays a role in cell envelope biogenesis, maintenance of cell envelope integrity and membrane homeostasis.</text>
</comment>
<comment type="subcellular location">
    <subcellularLocation>
        <location evidence="1">Cell inner membrane</location>
        <topology evidence="1">Multi-pass membrane protein</topology>
    </subcellularLocation>
</comment>
<comment type="similarity">
    <text evidence="1">Belongs to the YciB family.</text>
</comment>
<reference key="1">
    <citation type="journal article" date="2007" name="J. Bacteriol.">
        <title>Complete genome sequence of Haemophilus somnus (Histophilus somni) strain 129Pt and comparison to Haemophilus ducreyi 35000HP and Haemophilus influenzae Rd.</title>
        <authorList>
            <person name="Challacombe J.F."/>
            <person name="Duncan A.J."/>
            <person name="Brettin T.S."/>
            <person name="Bruce D."/>
            <person name="Chertkov O."/>
            <person name="Detter J.C."/>
            <person name="Han C.S."/>
            <person name="Misra M."/>
            <person name="Richardson P."/>
            <person name="Tapia R."/>
            <person name="Thayer N."/>
            <person name="Xie G."/>
            <person name="Inzana T.J."/>
        </authorList>
    </citation>
    <scope>NUCLEOTIDE SEQUENCE [LARGE SCALE GENOMIC DNA]</scope>
    <source>
        <strain>129Pt</strain>
    </source>
</reference>
<keyword id="KW-0997">Cell inner membrane</keyword>
<keyword id="KW-1003">Cell membrane</keyword>
<keyword id="KW-0472">Membrane</keyword>
<keyword id="KW-0812">Transmembrane</keyword>
<keyword id="KW-1133">Transmembrane helix</keyword>
<name>YCIB_HISS1</name>
<sequence>MKQLLEFIPLILFFAVYKLQGIQAAAITLIIATLIQLMILKLKYGKIEKQQLIMGSAVVFFGSLSAYFNELEFLKWKVTVVYALFSLILLVSQYGFKKPLIQQLLGKEIQLPTYVWHNLNLGWAVFFLLCMLINLYISQYLSDDIWVDFKTFGILGMTLIATLVTGVYIYRYLPKSEQE</sequence>
<feature type="chain" id="PRO_1000021017" description="Inner membrane-spanning protein YciB">
    <location>
        <begin position="1"/>
        <end position="179"/>
    </location>
</feature>
<feature type="transmembrane region" description="Helical" evidence="1">
    <location>
        <begin position="11"/>
        <end position="31"/>
    </location>
</feature>
<feature type="transmembrane region" description="Helical" evidence="1">
    <location>
        <begin position="52"/>
        <end position="69"/>
    </location>
</feature>
<feature type="transmembrane region" description="Helical" evidence="1">
    <location>
        <begin position="71"/>
        <end position="91"/>
    </location>
</feature>
<feature type="transmembrane region" description="Helical" evidence="1">
    <location>
        <begin position="121"/>
        <end position="141"/>
    </location>
</feature>
<feature type="transmembrane region" description="Helical" evidence="1">
    <location>
        <begin position="149"/>
        <end position="169"/>
    </location>
</feature>
<protein>
    <recommendedName>
        <fullName evidence="1">Inner membrane-spanning protein YciB</fullName>
    </recommendedName>
</protein>
<gene>
    <name evidence="1" type="primary">yciB</name>
    <name type="ordered locus">HS_1267</name>
</gene>
<proteinExistence type="inferred from homology"/>
<dbReference type="EMBL" id="CP000436">
    <property type="protein sequence ID" value="ABI25542.1"/>
    <property type="molecule type" value="Genomic_DNA"/>
</dbReference>
<dbReference type="SMR" id="Q0I4W6"/>
<dbReference type="KEGG" id="hso:HS_1267"/>
<dbReference type="eggNOG" id="COG2917">
    <property type="taxonomic scope" value="Bacteria"/>
</dbReference>
<dbReference type="HOGENOM" id="CLU_089554_2_0_6"/>
<dbReference type="GO" id="GO:0005886">
    <property type="term" value="C:plasma membrane"/>
    <property type="evidence" value="ECO:0007669"/>
    <property type="project" value="UniProtKB-SubCell"/>
</dbReference>
<dbReference type="HAMAP" id="MF_00189">
    <property type="entry name" value="YciB"/>
    <property type="match status" value="1"/>
</dbReference>
<dbReference type="InterPro" id="IPR006008">
    <property type="entry name" value="YciB"/>
</dbReference>
<dbReference type="NCBIfam" id="TIGR00997">
    <property type="entry name" value="ispZ"/>
    <property type="match status" value="1"/>
</dbReference>
<dbReference type="NCBIfam" id="NF001324">
    <property type="entry name" value="PRK00259.1-2"/>
    <property type="match status" value="1"/>
</dbReference>
<dbReference type="PANTHER" id="PTHR36917:SF1">
    <property type="entry name" value="INNER MEMBRANE-SPANNING PROTEIN YCIB"/>
    <property type="match status" value="1"/>
</dbReference>
<dbReference type="PANTHER" id="PTHR36917">
    <property type="entry name" value="INTRACELLULAR SEPTATION PROTEIN A-RELATED"/>
    <property type="match status" value="1"/>
</dbReference>
<dbReference type="Pfam" id="PF04279">
    <property type="entry name" value="IspA"/>
    <property type="match status" value="1"/>
</dbReference>